<name>PHBP_MEDTR</name>
<feature type="chain" id="PRO_0000429362" description="Phytohormone-binding protein">
    <location>
        <begin position="1"/>
        <end position="156"/>
    </location>
</feature>
<feature type="binding site" evidence="1 5">
    <location>
        <position position="22"/>
    </location>
    <ligand>
        <name>gibberellin A3</name>
        <dbReference type="ChEBI" id="CHEBI:58590"/>
    </ligand>
</feature>
<feature type="binding site" evidence="1 5">
    <location>
        <position position="68"/>
    </location>
    <ligand>
        <name>gibberellin A3</name>
        <dbReference type="ChEBI" id="CHEBI:58590"/>
    </ligand>
</feature>
<feature type="binding site" evidence="1 5">
    <location>
        <position position="141"/>
    </location>
    <ligand>
        <name>gibberellin A3</name>
        <dbReference type="ChEBI" id="CHEBI:58590"/>
    </ligand>
</feature>
<feature type="strand" evidence="6">
    <location>
        <begin position="3"/>
        <end position="13"/>
    </location>
</feature>
<feature type="helix" evidence="6">
    <location>
        <begin position="15"/>
        <end position="22"/>
    </location>
</feature>
<feature type="turn" evidence="6">
    <location>
        <begin position="23"/>
        <end position="25"/>
    </location>
</feature>
<feature type="helix" evidence="6">
    <location>
        <begin position="26"/>
        <end position="33"/>
    </location>
</feature>
<feature type="turn" evidence="6">
    <location>
        <begin position="35"/>
        <end position="37"/>
    </location>
</feature>
<feature type="strand" evidence="6">
    <location>
        <begin position="38"/>
        <end position="45"/>
    </location>
</feature>
<feature type="strand" evidence="6">
    <location>
        <begin position="47"/>
        <end position="49"/>
    </location>
</feature>
<feature type="strand" evidence="6">
    <location>
        <begin position="53"/>
        <end position="58"/>
    </location>
</feature>
<feature type="strand" evidence="6">
    <location>
        <begin position="62"/>
        <end position="64"/>
    </location>
</feature>
<feature type="strand" evidence="6">
    <location>
        <begin position="66"/>
        <end position="76"/>
    </location>
</feature>
<feature type="turn" evidence="6">
    <location>
        <begin position="77"/>
        <end position="80"/>
    </location>
</feature>
<feature type="strand" evidence="6">
    <location>
        <begin position="81"/>
        <end position="89"/>
    </location>
</feature>
<feature type="helix" evidence="6">
    <location>
        <begin position="90"/>
        <end position="93"/>
    </location>
</feature>
<feature type="strand" evidence="6">
    <location>
        <begin position="97"/>
        <end position="109"/>
    </location>
</feature>
<feature type="strand" evidence="6">
    <location>
        <begin position="112"/>
        <end position="122"/>
    </location>
</feature>
<feature type="strand" evidence="6">
    <location>
        <begin position="124"/>
        <end position="127"/>
    </location>
</feature>
<feature type="helix" evidence="6">
    <location>
        <begin position="130"/>
        <end position="132"/>
    </location>
</feature>
<feature type="helix" evidence="6">
    <location>
        <begin position="134"/>
        <end position="153"/>
    </location>
</feature>
<gene>
    <name evidence="4" type="ordered locus">MTR_3g055120</name>
</gene>
<protein>
    <recommendedName>
        <fullName evidence="2">Phytohormone-binding protein</fullName>
    </recommendedName>
    <alternativeName>
        <fullName evidence="3">Major pollen allergen Bet v 1-like protein</fullName>
    </alternativeName>
    <alternativeName>
        <fullName evidence="3">Pathogenesis-related PR10-like protein</fullName>
    </alternativeName>
</protein>
<proteinExistence type="evidence at protein level"/>
<accession>G7J032</accession>
<reference key="1">
    <citation type="journal article" date="2011" name="Nature">
        <title>The Medicago genome provides insight into the evolution of rhizobial symbioses.</title>
        <authorList>
            <person name="Young N.D."/>
            <person name="Debelle F."/>
            <person name="Oldroyd G.E.D."/>
            <person name="Geurts R."/>
            <person name="Cannon S.B."/>
            <person name="Udvardi M.K."/>
            <person name="Benedito V.A."/>
            <person name="Mayer K.F.X."/>
            <person name="Gouzy J."/>
            <person name="Schoof H."/>
            <person name="Van de Peer Y."/>
            <person name="Proost S."/>
            <person name="Cook D.R."/>
            <person name="Meyers B.C."/>
            <person name="Spannagl M."/>
            <person name="Cheung F."/>
            <person name="De Mita S."/>
            <person name="Krishnakumar V."/>
            <person name="Gundlach H."/>
            <person name="Zhou S."/>
            <person name="Mudge J."/>
            <person name="Bharti A.K."/>
            <person name="Murray J.D."/>
            <person name="Naoumkina M.A."/>
            <person name="Rosen B."/>
            <person name="Silverstein K.A.T."/>
            <person name="Tang H."/>
            <person name="Rombauts S."/>
            <person name="Zhao P.X."/>
            <person name="Zhou P."/>
            <person name="Barbe V."/>
            <person name="Bardou P."/>
            <person name="Bechner M."/>
            <person name="Bellec A."/>
            <person name="Berger A."/>
            <person name="Berges H."/>
            <person name="Bidwell S."/>
            <person name="Bisseling T."/>
            <person name="Choisne N."/>
            <person name="Couloux A."/>
            <person name="Denny R."/>
            <person name="Deshpande S."/>
            <person name="Dai X."/>
            <person name="Doyle J.J."/>
            <person name="Dudez A.-M."/>
            <person name="Farmer A.D."/>
            <person name="Fouteau S."/>
            <person name="Franken C."/>
            <person name="Gibelin C."/>
            <person name="Gish J."/>
            <person name="Goldstein S."/>
            <person name="Gonzalez A.J."/>
            <person name="Green P.J."/>
            <person name="Hallab A."/>
            <person name="Hartog M."/>
            <person name="Hua A."/>
            <person name="Humphray S.J."/>
            <person name="Jeong D.-H."/>
            <person name="Jing Y."/>
            <person name="Jocker A."/>
            <person name="Kenton S.M."/>
            <person name="Kim D.-J."/>
            <person name="Klee K."/>
            <person name="Lai H."/>
            <person name="Lang C."/>
            <person name="Lin S."/>
            <person name="Macmil S.L."/>
            <person name="Magdelenat G."/>
            <person name="Matthews L."/>
            <person name="McCorrison J."/>
            <person name="Monaghan E.L."/>
            <person name="Mun J.-H."/>
            <person name="Najar F.Z."/>
            <person name="Nicholson C."/>
            <person name="Noirot C."/>
            <person name="O'Bleness M."/>
            <person name="Paule C.R."/>
            <person name="Poulain J."/>
            <person name="Prion F."/>
            <person name="Qin B."/>
            <person name="Qu C."/>
            <person name="Retzel E.F."/>
            <person name="Riddle C."/>
            <person name="Sallet E."/>
            <person name="Samain S."/>
            <person name="Samson N."/>
            <person name="Sanders I."/>
            <person name="Saurat O."/>
            <person name="Scarpelli C."/>
            <person name="Schiex T."/>
            <person name="Segurens B."/>
            <person name="Severin A.J."/>
            <person name="Sherrier D.J."/>
            <person name="Shi R."/>
            <person name="Sims S."/>
            <person name="Singer S.R."/>
            <person name="Sinharoy S."/>
            <person name="Sterck L."/>
            <person name="Viollet A."/>
            <person name="Wang B.-B."/>
            <person name="Wang K."/>
            <person name="Wang M."/>
            <person name="Wang X."/>
            <person name="Warfsmann J."/>
            <person name="Weissenbach J."/>
            <person name="White D.D."/>
            <person name="White J.D."/>
            <person name="Wiley G.B."/>
            <person name="Wincker P."/>
            <person name="Xing Y."/>
            <person name="Yang L."/>
            <person name="Yao Z."/>
            <person name="Ying F."/>
            <person name="Zhai J."/>
            <person name="Zhou L."/>
            <person name="Zuber A."/>
            <person name="Denarie J."/>
            <person name="Dixon R.A."/>
            <person name="May G.D."/>
            <person name="Schwartz D.C."/>
            <person name="Rogers J."/>
            <person name="Quetier F."/>
            <person name="Town C.D."/>
            <person name="Roe B.A."/>
        </authorList>
    </citation>
    <scope>NUCLEOTIDE SEQUENCE [LARGE SCALE GENOMIC DNA]</scope>
    <source>
        <strain>cv. Jemalong A17</strain>
    </source>
</reference>
<reference key="2">
    <citation type="journal article" date="2014" name="BMC Genomics">
        <title>An improved genome release (version Mt4.0) for the model legume Medicago truncatula.</title>
        <authorList>
            <person name="Tang H."/>
            <person name="Krishnakumar V."/>
            <person name="Bidwell S."/>
            <person name="Rosen B."/>
            <person name="Chan A."/>
            <person name="Zhou S."/>
            <person name="Gentzbittel L."/>
            <person name="Childs K.L."/>
            <person name="Yandell M."/>
            <person name="Gundlach H."/>
            <person name="Mayer K.F."/>
            <person name="Schwartz D.C."/>
            <person name="Town C.D."/>
        </authorList>
    </citation>
    <scope>GENOME REANNOTATION</scope>
    <source>
        <strain>cv. Jemalong A17</strain>
    </source>
</reference>
<reference key="3">
    <citation type="submission" date="2012-05" db="EMBL/GenBank/DDBJ databases">
        <authorList>
            <person name="Krishnakumar V."/>
            <person name="Cheung F."/>
            <person name="Xiao Y."/>
            <person name="Chan A."/>
            <person name="Moskal W.A."/>
            <person name="Town C.D."/>
        </authorList>
    </citation>
    <scope>NUCLEOTIDE SEQUENCE [LARGE SCALE MRNA]</scope>
</reference>
<reference key="4">
    <citation type="journal article" date="2014" name="Acta Crystallogr. D">
        <title>Specific binding of gibberellic acid by cytokinin-specific binding proteins: a new aspect of plant hormone-binding proteins with the PR-10 fold.</title>
        <authorList>
            <person name="Ruszkowski M."/>
            <person name="Sliwiak J."/>
            <person name="Ciesielska A."/>
            <person name="Barciszewski J."/>
            <person name="Sikorski M."/>
            <person name="Jaskolski M."/>
        </authorList>
    </citation>
    <scope>X-RAY CRYSTALLOGRAPHY (1.34 ANGSTROMS) IN COMPLEX WITH GIBBERELLIN A3</scope>
    <scope>FUNCTION</scope>
</reference>
<sequence>MIKEFNTQTTLNVGLEALWAAQSKDITLVVPKVLPNIVKDVQVIEGDGGVGTKLIFNFLPGIAPVNYQREVITEYDELSHTIGLQVVEGGYLNQGLSYYKTTFQFSAISENKTLVNVKISYDHESELIEEKVKPTKTSESTLFYLGQLEKFLLNGA</sequence>
<keyword id="KW-0002">3D-structure</keyword>
<keyword id="KW-0939">Gibberellin signaling pathway</keyword>
<keyword id="KW-0568">Pathogenesis-related protein</keyword>
<keyword id="KW-0611">Plant defense</keyword>
<keyword id="KW-1185">Reference proteome</keyword>
<organism>
    <name type="scientific">Medicago truncatula</name>
    <name type="common">Barrel medic</name>
    <name type="synonym">Medicago tribuloides</name>
    <dbReference type="NCBI Taxonomy" id="3880"/>
    <lineage>
        <taxon>Eukaryota</taxon>
        <taxon>Viridiplantae</taxon>
        <taxon>Streptophyta</taxon>
        <taxon>Embryophyta</taxon>
        <taxon>Tracheophyta</taxon>
        <taxon>Spermatophyta</taxon>
        <taxon>Magnoliopsida</taxon>
        <taxon>eudicotyledons</taxon>
        <taxon>Gunneridae</taxon>
        <taxon>Pentapetalae</taxon>
        <taxon>rosids</taxon>
        <taxon>fabids</taxon>
        <taxon>Fabales</taxon>
        <taxon>Fabaceae</taxon>
        <taxon>Papilionoideae</taxon>
        <taxon>50 kb inversion clade</taxon>
        <taxon>NPAAA clade</taxon>
        <taxon>Hologalegina</taxon>
        <taxon>IRL clade</taxon>
        <taxon>Trifolieae</taxon>
        <taxon>Medicago</taxon>
    </lineage>
</organism>
<comment type="function">
    <text evidence="1">Binds gibberellin A3 (GA3) in vitro.</text>
</comment>
<comment type="similarity">
    <text evidence="3">Belongs to the BetVI family.</text>
</comment>
<dbReference type="EMBL" id="CM001219">
    <property type="protein sequence ID" value="AES70428.1"/>
    <property type="molecule type" value="Genomic_DNA"/>
</dbReference>
<dbReference type="EMBL" id="BT140779">
    <property type="protein sequence ID" value="AFK40574.1"/>
    <property type="molecule type" value="mRNA"/>
</dbReference>
<dbReference type="RefSeq" id="XP_003600177.1">
    <property type="nucleotide sequence ID" value="XM_003600129.2"/>
</dbReference>
<dbReference type="PDB" id="4Q0K">
    <property type="method" value="X-ray"/>
    <property type="resolution" value="1.34 A"/>
    <property type="chains" value="A=1-156"/>
</dbReference>
<dbReference type="PDBsum" id="4Q0K"/>
<dbReference type="SMR" id="G7J032"/>
<dbReference type="STRING" id="3880.G7J032"/>
<dbReference type="PaxDb" id="3880-AES70428"/>
<dbReference type="EnsemblPlants" id="rna15360">
    <property type="protein sequence ID" value="RHN67202.1"/>
    <property type="gene ID" value="gene15360"/>
</dbReference>
<dbReference type="Gramene" id="rna15360">
    <property type="protein sequence ID" value="RHN67202.1"/>
    <property type="gene ID" value="gene15360"/>
</dbReference>
<dbReference type="KEGG" id="mtr:11418550"/>
<dbReference type="eggNOG" id="ENOG502S34N">
    <property type="taxonomic scope" value="Eukaryota"/>
</dbReference>
<dbReference type="OMA" id="YQRERIT"/>
<dbReference type="OrthoDB" id="1845342at2759"/>
<dbReference type="EvolutionaryTrace" id="G7J032"/>
<dbReference type="Proteomes" id="UP000002051">
    <property type="component" value="Chromosome 3"/>
</dbReference>
<dbReference type="ExpressionAtlas" id="G7J032">
    <property type="expression patterns" value="differential"/>
</dbReference>
<dbReference type="GO" id="GO:0005737">
    <property type="term" value="C:cytoplasm"/>
    <property type="evidence" value="ECO:0000318"/>
    <property type="project" value="GO_Central"/>
</dbReference>
<dbReference type="GO" id="GO:0005634">
    <property type="term" value="C:nucleus"/>
    <property type="evidence" value="ECO:0000318"/>
    <property type="project" value="GO_Central"/>
</dbReference>
<dbReference type="GO" id="GO:0010427">
    <property type="term" value="F:abscisic acid binding"/>
    <property type="evidence" value="ECO:0000318"/>
    <property type="project" value="GO_Central"/>
</dbReference>
<dbReference type="GO" id="GO:0004864">
    <property type="term" value="F:protein phosphatase inhibitor activity"/>
    <property type="evidence" value="ECO:0000318"/>
    <property type="project" value="GO_Central"/>
</dbReference>
<dbReference type="GO" id="GO:0038023">
    <property type="term" value="F:signaling receptor activity"/>
    <property type="evidence" value="ECO:0000318"/>
    <property type="project" value="GO_Central"/>
</dbReference>
<dbReference type="GO" id="GO:0009738">
    <property type="term" value="P:abscisic acid-activated signaling pathway"/>
    <property type="evidence" value="ECO:0000318"/>
    <property type="project" value="GO_Central"/>
</dbReference>
<dbReference type="GO" id="GO:0006952">
    <property type="term" value="P:defense response"/>
    <property type="evidence" value="ECO:0007669"/>
    <property type="project" value="UniProtKB-KW"/>
</dbReference>
<dbReference type="GO" id="GO:0009740">
    <property type="term" value="P:gibberellic acid mediated signaling pathway"/>
    <property type="evidence" value="ECO:0007669"/>
    <property type="project" value="UniProtKB-KW"/>
</dbReference>
<dbReference type="CDD" id="cd07816">
    <property type="entry name" value="Bet_v1-like"/>
    <property type="match status" value="1"/>
</dbReference>
<dbReference type="Gene3D" id="3.30.530.20">
    <property type="match status" value="1"/>
</dbReference>
<dbReference type="InterPro" id="IPR000916">
    <property type="entry name" value="Bet_v_I/MLP"/>
</dbReference>
<dbReference type="InterPro" id="IPR050279">
    <property type="entry name" value="Plant_def-hormone_signal"/>
</dbReference>
<dbReference type="InterPro" id="IPR023393">
    <property type="entry name" value="START-like_dom_sf"/>
</dbReference>
<dbReference type="PANTHER" id="PTHR31213">
    <property type="entry name" value="OS08G0374000 PROTEIN-RELATED"/>
    <property type="match status" value="1"/>
</dbReference>
<dbReference type="PANTHER" id="PTHR31213:SF64">
    <property type="entry name" value="PHYTOHORMONE-BINDING PROTEIN"/>
    <property type="match status" value="1"/>
</dbReference>
<dbReference type="Pfam" id="PF00407">
    <property type="entry name" value="Bet_v_1"/>
    <property type="match status" value="1"/>
</dbReference>
<dbReference type="SUPFAM" id="SSF55961">
    <property type="entry name" value="Bet v1-like"/>
    <property type="match status" value="1"/>
</dbReference>
<evidence type="ECO:0000269" key="1">
    <source>
    </source>
</evidence>
<evidence type="ECO:0000303" key="2">
    <source>
    </source>
</evidence>
<evidence type="ECO:0000305" key="3"/>
<evidence type="ECO:0000312" key="4">
    <source>
        <dbReference type="EMBL" id="AES70428.1"/>
    </source>
</evidence>
<evidence type="ECO:0007744" key="5">
    <source>
        <dbReference type="PDB" id="4Q0K"/>
    </source>
</evidence>
<evidence type="ECO:0007829" key="6">
    <source>
        <dbReference type="PDB" id="4Q0K"/>
    </source>
</evidence>